<protein>
    <recommendedName>
        <fullName evidence="1">DNA replication terminus site-binding protein</fullName>
        <shortName evidence="1">Ter-binding protein</shortName>
    </recommendedName>
</protein>
<name>TUS_SALPB</name>
<proteinExistence type="inferred from homology"/>
<feature type="chain" id="PRO_1000081317" description="DNA replication terminus site-binding protein">
    <location>
        <begin position="1"/>
        <end position="309"/>
    </location>
</feature>
<organism>
    <name type="scientific">Salmonella paratyphi B (strain ATCC BAA-1250 / SPB7)</name>
    <dbReference type="NCBI Taxonomy" id="1016998"/>
    <lineage>
        <taxon>Bacteria</taxon>
        <taxon>Pseudomonadati</taxon>
        <taxon>Pseudomonadota</taxon>
        <taxon>Gammaproteobacteria</taxon>
        <taxon>Enterobacterales</taxon>
        <taxon>Enterobacteriaceae</taxon>
        <taxon>Salmonella</taxon>
    </lineage>
</organism>
<dbReference type="EMBL" id="CP000886">
    <property type="protein sequence ID" value="ABX67242.1"/>
    <property type="molecule type" value="Genomic_DNA"/>
</dbReference>
<dbReference type="RefSeq" id="WP_000092495.1">
    <property type="nucleotide sequence ID" value="NC_010102.1"/>
</dbReference>
<dbReference type="SMR" id="A9N011"/>
<dbReference type="KEGG" id="spq:SPAB_01849"/>
<dbReference type="PATRIC" id="fig|1016998.12.peg.1742"/>
<dbReference type="HOGENOM" id="CLU_078181_0_0_6"/>
<dbReference type="BioCyc" id="SENT1016998:SPAB_RS07490-MONOMER"/>
<dbReference type="Proteomes" id="UP000008556">
    <property type="component" value="Chromosome"/>
</dbReference>
<dbReference type="GO" id="GO:0005737">
    <property type="term" value="C:cytoplasm"/>
    <property type="evidence" value="ECO:0007669"/>
    <property type="project" value="UniProtKB-SubCell"/>
</dbReference>
<dbReference type="GO" id="GO:0003677">
    <property type="term" value="F:DNA binding"/>
    <property type="evidence" value="ECO:0007669"/>
    <property type="project" value="UniProtKB-UniRule"/>
</dbReference>
<dbReference type="GO" id="GO:0006274">
    <property type="term" value="P:DNA replication termination"/>
    <property type="evidence" value="ECO:0007669"/>
    <property type="project" value="UniProtKB-UniRule"/>
</dbReference>
<dbReference type="Gene3D" id="3.30.54.10">
    <property type="match status" value="1"/>
</dbReference>
<dbReference type="Gene3D" id="3.50.14.10">
    <property type="entry name" value="Replication terminator Tus, domain 1 superfamily/Replication terminator Tus"/>
    <property type="match status" value="1"/>
</dbReference>
<dbReference type="HAMAP" id="MF_00483">
    <property type="entry name" value="Rep_term_Tus"/>
    <property type="match status" value="1"/>
</dbReference>
<dbReference type="InterPro" id="IPR008865">
    <property type="entry name" value="DNA_replication_term_site-bd"/>
</dbReference>
<dbReference type="InterPro" id="IPR036381">
    <property type="entry name" value="Tus_dom1"/>
</dbReference>
<dbReference type="InterPro" id="IPR036384">
    <property type="entry name" value="Tus_sf"/>
</dbReference>
<dbReference type="NCBIfam" id="TIGR02648">
    <property type="entry name" value="rep_term_tus"/>
    <property type="match status" value="1"/>
</dbReference>
<dbReference type="Pfam" id="PF05472">
    <property type="entry name" value="Ter"/>
    <property type="match status" value="1"/>
</dbReference>
<dbReference type="SUPFAM" id="SSF56596">
    <property type="entry name" value="Replication terminator protein (Tus)"/>
    <property type="match status" value="1"/>
</dbReference>
<accession>A9N011</accession>
<comment type="function">
    <text evidence="1">Trans-acting protein required for termination of DNA replication. Binds to DNA replication terminator sequences (terA to terF) to prevent the passage of replication forks. The termination efficiency will be affected by the affinity of this protein for the terminator sequence.</text>
</comment>
<comment type="subcellular location">
    <subcellularLocation>
        <location evidence="1">Cytoplasm</location>
    </subcellularLocation>
</comment>
<comment type="similarity">
    <text evidence="1">Belongs to the Tus family.</text>
</comment>
<sequence length="309" mass="35501">MSRYDLVERLNGTFRQIEQHLAALTDNLQQHSLLIARVFSLPQVTKEAEHAPLDTIEVTQHLGKEAETLALRHYRHLFIQQQSENRSSKAAVRLPGVLCYQVDNATQLDLENQIQRINQLKTTFEQMVTVESGLPSAARFEWVHRHLPGLITLNAYRTLTLINNPATIRFGWANKHIIKNLSRDEVLSQLKKSLASPRSVPPWTREQWQFKLEREYQDIAALPQQARLKIKRPVKVQPIARIWYKGQQKQVQHACPTPIIALINTDNGAGVPDIGGLENYDADNIQHRFKPQAQPLRLIIPRLHLYVAD</sequence>
<reference key="1">
    <citation type="submission" date="2007-11" db="EMBL/GenBank/DDBJ databases">
        <authorList>
            <consortium name="The Salmonella enterica serovar Paratyphi B Genome Sequencing Project"/>
            <person name="McClelland M."/>
            <person name="Sanderson E.K."/>
            <person name="Porwollik S."/>
            <person name="Spieth J."/>
            <person name="Clifton W.S."/>
            <person name="Fulton R."/>
            <person name="Cordes M."/>
            <person name="Wollam A."/>
            <person name="Shah N."/>
            <person name="Pepin K."/>
            <person name="Bhonagiri V."/>
            <person name="Nash W."/>
            <person name="Johnson M."/>
            <person name="Thiruvilangam P."/>
            <person name="Wilson R."/>
        </authorList>
    </citation>
    <scope>NUCLEOTIDE SEQUENCE [LARGE SCALE GENOMIC DNA]</scope>
    <source>
        <strain>ATCC BAA-1250 / SPB7</strain>
    </source>
</reference>
<gene>
    <name evidence="1" type="primary">tus</name>
    <name type="ordered locus">SPAB_01849</name>
</gene>
<evidence type="ECO:0000255" key="1">
    <source>
        <dbReference type="HAMAP-Rule" id="MF_00483"/>
    </source>
</evidence>
<keyword id="KW-0963">Cytoplasm</keyword>
<keyword id="KW-0235">DNA replication</keyword>
<keyword id="KW-0238">DNA-binding</keyword>